<accession>P77031</accession>
<accession>P76634</accession>
<accession>P76635</accession>
<proteinExistence type="evidence at protein level"/>
<name>YQCE_ECOLI</name>
<evidence type="ECO:0000255" key="1"/>
<evidence type="ECO:0000305" key="2"/>
<gene>
    <name type="primary">yqcE</name>
    <name type="synonym">yqcF</name>
    <name type="ordered locus">b2775</name>
    <name type="ordered locus">JW2746</name>
</gene>
<reference key="1">
    <citation type="journal article" date="1997" name="DNA Res.">
        <title>Construction of a contiguous 874-kb sequence of the Escherichia coli-K12 genome corresponding to 50.0-68.8 min on the linkage map and analysis of its sequence features.</title>
        <authorList>
            <person name="Yamamoto Y."/>
            <person name="Aiba H."/>
            <person name="Baba T."/>
            <person name="Hayashi K."/>
            <person name="Inada T."/>
            <person name="Isono K."/>
            <person name="Itoh T."/>
            <person name="Kimura S."/>
            <person name="Kitagawa M."/>
            <person name="Makino K."/>
            <person name="Miki T."/>
            <person name="Mitsuhashi N."/>
            <person name="Mizobuchi K."/>
            <person name="Mori H."/>
            <person name="Nakade S."/>
            <person name="Nakamura Y."/>
            <person name="Nashimoto H."/>
            <person name="Oshima T."/>
            <person name="Oyama S."/>
            <person name="Saito N."/>
            <person name="Sampei G."/>
            <person name="Satoh Y."/>
            <person name="Sivasundaram S."/>
            <person name="Tagami H."/>
            <person name="Takahashi H."/>
            <person name="Takeda J."/>
            <person name="Takemoto K."/>
            <person name="Uehara K."/>
            <person name="Wada C."/>
            <person name="Yamagata S."/>
            <person name="Horiuchi T."/>
        </authorList>
    </citation>
    <scope>NUCLEOTIDE SEQUENCE [LARGE SCALE GENOMIC DNA]</scope>
    <source>
        <strain>K12 / W3110 / ATCC 27325 / DSM 5911</strain>
    </source>
</reference>
<reference key="2">
    <citation type="journal article" date="1997" name="Science">
        <title>The complete genome sequence of Escherichia coli K-12.</title>
        <authorList>
            <person name="Blattner F.R."/>
            <person name="Plunkett G. III"/>
            <person name="Bloch C.A."/>
            <person name="Perna N.T."/>
            <person name="Burland V."/>
            <person name="Riley M."/>
            <person name="Collado-Vides J."/>
            <person name="Glasner J.D."/>
            <person name="Rode C.K."/>
            <person name="Mayhew G.F."/>
            <person name="Gregor J."/>
            <person name="Davis N.W."/>
            <person name="Kirkpatrick H.A."/>
            <person name="Goeden M.A."/>
            <person name="Rose D.J."/>
            <person name="Mau B."/>
            <person name="Shao Y."/>
        </authorList>
    </citation>
    <scope>NUCLEOTIDE SEQUENCE [LARGE SCALE GENOMIC DNA]</scope>
    <source>
        <strain>K12 / MG1655 / ATCC 47076</strain>
    </source>
</reference>
<reference key="3">
    <citation type="journal article" date="2006" name="Mol. Syst. Biol.">
        <title>Highly accurate genome sequences of Escherichia coli K-12 strains MG1655 and W3110.</title>
        <authorList>
            <person name="Hayashi K."/>
            <person name="Morooka N."/>
            <person name="Yamamoto Y."/>
            <person name="Fujita K."/>
            <person name="Isono K."/>
            <person name="Choi S."/>
            <person name="Ohtsubo E."/>
            <person name="Baba T."/>
            <person name="Wanner B.L."/>
            <person name="Mori H."/>
            <person name="Horiuchi T."/>
        </authorList>
    </citation>
    <scope>NUCLEOTIDE SEQUENCE [LARGE SCALE GENOMIC DNA]</scope>
    <source>
        <strain>K12 / W3110 / ATCC 27325 / DSM 5911</strain>
    </source>
</reference>
<reference key="4">
    <citation type="journal article" date="2005" name="Science">
        <title>Global topology analysis of the Escherichia coli inner membrane proteome.</title>
        <authorList>
            <person name="Daley D.O."/>
            <person name="Rapp M."/>
            <person name="Granseth E."/>
            <person name="Melen K."/>
            <person name="Drew D."/>
            <person name="von Heijne G."/>
        </authorList>
    </citation>
    <scope>TOPOLOGY [LARGE SCALE ANALYSIS]</scope>
    <source>
        <strain>K12 / MG1655 / ATCC 47076</strain>
    </source>
</reference>
<organism>
    <name type="scientific">Escherichia coli (strain K12)</name>
    <dbReference type="NCBI Taxonomy" id="83333"/>
    <lineage>
        <taxon>Bacteria</taxon>
        <taxon>Pseudomonadati</taxon>
        <taxon>Pseudomonadota</taxon>
        <taxon>Gammaproteobacteria</taxon>
        <taxon>Enterobacterales</taxon>
        <taxon>Enterobacteriaceae</taxon>
        <taxon>Escherichia</taxon>
    </lineage>
</organism>
<dbReference type="EMBL" id="U00096">
    <property type="protein sequence ID" value="AAC75817.1"/>
    <property type="molecule type" value="Genomic_DNA"/>
</dbReference>
<dbReference type="EMBL" id="AP009048">
    <property type="protein sequence ID" value="BAA16570.1"/>
    <property type="molecule type" value="Genomic_DNA"/>
</dbReference>
<dbReference type="PIR" id="C65059">
    <property type="entry name" value="C65059"/>
</dbReference>
<dbReference type="RefSeq" id="NP_417255.1">
    <property type="nucleotide sequence ID" value="NC_000913.3"/>
</dbReference>
<dbReference type="RefSeq" id="WP_001164544.1">
    <property type="nucleotide sequence ID" value="NZ_LN832404.1"/>
</dbReference>
<dbReference type="BioGRID" id="4262293">
    <property type="interactions" value="139"/>
</dbReference>
<dbReference type="DIP" id="DIP-12849N"/>
<dbReference type="FunCoup" id="P77031">
    <property type="interactions" value="97"/>
</dbReference>
<dbReference type="IntAct" id="P77031">
    <property type="interactions" value="1"/>
</dbReference>
<dbReference type="STRING" id="511145.b2775"/>
<dbReference type="PaxDb" id="511145-b2775"/>
<dbReference type="EnsemblBacteria" id="AAC75817">
    <property type="protein sequence ID" value="AAC75817"/>
    <property type="gene ID" value="b2775"/>
</dbReference>
<dbReference type="GeneID" id="947248"/>
<dbReference type="KEGG" id="ecj:JW2746"/>
<dbReference type="KEGG" id="eco:b2775"/>
<dbReference type="KEGG" id="ecoc:C3026_15240"/>
<dbReference type="PATRIC" id="fig|1411691.4.peg.3963"/>
<dbReference type="EchoBASE" id="EB2966"/>
<dbReference type="eggNOG" id="COG2223">
    <property type="taxonomic scope" value="Bacteria"/>
</dbReference>
<dbReference type="HOGENOM" id="CLU_043790_0_0_6"/>
<dbReference type="InParanoid" id="P77031"/>
<dbReference type="OMA" id="YQILMIV"/>
<dbReference type="OrthoDB" id="9773404at2"/>
<dbReference type="PhylomeDB" id="P77031"/>
<dbReference type="BioCyc" id="EcoCyc:B2775-MONOMER"/>
<dbReference type="PRO" id="PR:P77031"/>
<dbReference type="Proteomes" id="UP000000625">
    <property type="component" value="Chromosome"/>
</dbReference>
<dbReference type="GO" id="GO:0005886">
    <property type="term" value="C:plasma membrane"/>
    <property type="evidence" value="ECO:0000255"/>
    <property type="project" value="EcoCyc"/>
</dbReference>
<dbReference type="GO" id="GO:0022857">
    <property type="term" value="F:transmembrane transporter activity"/>
    <property type="evidence" value="ECO:0007669"/>
    <property type="project" value="InterPro"/>
</dbReference>
<dbReference type="CDD" id="cd06174">
    <property type="entry name" value="MFS"/>
    <property type="match status" value="1"/>
</dbReference>
<dbReference type="FunFam" id="1.20.1250.20:FF:000293">
    <property type="entry name" value="Inner membrane protein YqcE"/>
    <property type="match status" value="1"/>
</dbReference>
<dbReference type="FunFam" id="1.20.1250.20:FF:000303">
    <property type="entry name" value="Inner membrane protein YqcE"/>
    <property type="match status" value="1"/>
</dbReference>
<dbReference type="Gene3D" id="1.20.1250.20">
    <property type="entry name" value="MFS general substrate transporter like domains"/>
    <property type="match status" value="2"/>
</dbReference>
<dbReference type="InterPro" id="IPR011701">
    <property type="entry name" value="MFS"/>
</dbReference>
<dbReference type="InterPro" id="IPR020846">
    <property type="entry name" value="MFS_dom"/>
</dbReference>
<dbReference type="InterPro" id="IPR036259">
    <property type="entry name" value="MFS_trans_sf"/>
</dbReference>
<dbReference type="PANTHER" id="PTHR43184">
    <property type="entry name" value="MAJOR FACILITATOR SUPERFAMILY TRANSPORTER 16, ISOFORM B"/>
    <property type="match status" value="1"/>
</dbReference>
<dbReference type="PANTHER" id="PTHR43184:SF12">
    <property type="entry name" value="SUGAR PHOSPHATE EXCHANGER 3"/>
    <property type="match status" value="1"/>
</dbReference>
<dbReference type="Pfam" id="PF07690">
    <property type="entry name" value="MFS_1"/>
    <property type="match status" value="1"/>
</dbReference>
<dbReference type="SUPFAM" id="SSF103473">
    <property type="entry name" value="MFS general substrate transporter"/>
    <property type="match status" value="1"/>
</dbReference>
<dbReference type="PROSITE" id="PS50850">
    <property type="entry name" value="MFS"/>
    <property type="match status" value="1"/>
</dbReference>
<comment type="subcellular location">
    <subcellularLocation>
        <location>Cell inner membrane</location>
        <topology>Multi-pass membrane protein</topology>
    </subcellularLocation>
</comment>
<comment type="similarity">
    <text evidence="2">To E.coli YihN.</text>
</comment>
<keyword id="KW-0997">Cell inner membrane</keyword>
<keyword id="KW-1003">Cell membrane</keyword>
<keyword id="KW-0472">Membrane</keyword>
<keyword id="KW-1185">Reference proteome</keyword>
<keyword id="KW-0812">Transmembrane</keyword>
<keyword id="KW-1133">Transmembrane helix</keyword>
<protein>
    <recommendedName>
        <fullName>Inner membrane protein YqcE</fullName>
    </recommendedName>
</protein>
<feature type="chain" id="PRO_0000169328" description="Inner membrane protein YqcE">
    <location>
        <begin position="1"/>
        <end position="425"/>
    </location>
</feature>
<feature type="topological domain" description="Cytoplasmic" evidence="1">
    <location>
        <begin position="1"/>
        <end position="8"/>
    </location>
</feature>
<feature type="transmembrane region" description="Helical" evidence="1">
    <location>
        <begin position="9"/>
        <end position="29"/>
    </location>
</feature>
<feature type="topological domain" description="Periplasmic" evidence="1">
    <location>
        <begin position="30"/>
        <end position="48"/>
    </location>
</feature>
<feature type="transmembrane region" description="Helical" evidence="1">
    <location>
        <begin position="49"/>
        <end position="69"/>
    </location>
</feature>
<feature type="topological domain" description="Cytoplasmic" evidence="1">
    <location>
        <begin position="70"/>
        <end position="75"/>
    </location>
</feature>
<feature type="transmembrane region" description="Helical" evidence="1">
    <location>
        <begin position="76"/>
        <end position="96"/>
    </location>
</feature>
<feature type="transmembrane region" description="Helical" evidence="1">
    <location>
        <begin position="97"/>
        <end position="117"/>
    </location>
</feature>
<feature type="topological domain" description="Cytoplasmic" evidence="1">
    <location>
        <begin position="118"/>
        <end position="138"/>
    </location>
</feature>
<feature type="transmembrane region" description="Helical" evidence="1">
    <location>
        <begin position="139"/>
        <end position="159"/>
    </location>
</feature>
<feature type="topological domain" description="Periplasmic" evidence="1">
    <location>
        <begin position="160"/>
        <end position="171"/>
    </location>
</feature>
<feature type="transmembrane region" description="Helical" evidence="1">
    <location>
        <begin position="172"/>
        <end position="192"/>
    </location>
</feature>
<feature type="topological domain" description="Cytoplasmic" evidence="1">
    <location>
        <begin position="193"/>
        <end position="219"/>
    </location>
</feature>
<feature type="transmembrane region" description="Helical" evidence="1">
    <location>
        <begin position="220"/>
        <end position="240"/>
    </location>
</feature>
<feature type="topological domain" description="Periplasmic" evidence="1">
    <location>
        <begin position="241"/>
        <end position="259"/>
    </location>
</feature>
<feature type="transmembrane region" description="Helical" evidence="1">
    <location>
        <begin position="260"/>
        <end position="280"/>
    </location>
</feature>
<feature type="topological domain" description="Cytoplasmic" evidence="1">
    <location>
        <begin position="281"/>
        <end position="291"/>
    </location>
</feature>
<feature type="transmembrane region" description="Helical" evidence="1">
    <location>
        <begin position="292"/>
        <end position="312"/>
    </location>
</feature>
<feature type="topological domain" description="Periplasmic" evidence="1">
    <location>
        <position position="313"/>
    </location>
</feature>
<feature type="transmembrane region" description="Helical" evidence="1">
    <location>
        <begin position="314"/>
        <end position="334"/>
    </location>
</feature>
<feature type="topological domain" description="Cytoplasmic" evidence="1">
    <location>
        <begin position="335"/>
        <end position="354"/>
    </location>
</feature>
<feature type="transmembrane region" description="Helical" evidence="1">
    <location>
        <begin position="355"/>
        <end position="375"/>
    </location>
</feature>
<feature type="topological domain" description="Periplasmic" evidence="1">
    <location>
        <begin position="376"/>
        <end position="388"/>
    </location>
</feature>
<feature type="transmembrane region" description="Helical" evidence="1">
    <location>
        <begin position="389"/>
        <end position="409"/>
    </location>
</feature>
<feature type="topological domain" description="Cytoplasmic" evidence="1">
    <location>
        <begin position="410"/>
        <end position="425"/>
    </location>
</feature>
<sequence>MQHNSYRRWITLAIISFSGGVSFDLAYLRYIYQIPMAKFMGFSNTEIGLIMSTFGIAAIILYAPSGVIADKFSHRKMITSAMIITGLLGLLMATYPPLWVMLCIQIAFAITTILMLWSVSIKAASLLGDHSEQGKIMGWMEGLRGVGVMSLAVFTMWVFSRFAPDDSTSLKTVIIIYSVVYILLGILCWFFVSDNNNLRSANNEEKQSFQLSDILAVLRISTTWYCSMVIFGVFTIYAILSYSTNYLTEMYGMSLVAASYMGIVINKIFRALCGPLGGIITTYSKVKSPTRVIQILSVLGLLTLTALLVTNSNPQSVAMGIGLILLLGFTCYASRGLYWACPGEARTPSYIMGTTVGICSVIGFLPDVFVYPIIGHWQDTLPAAEAYRNMWLMGMAALGMVIVFTFLLFQKIRTADSAPAMASSK</sequence>